<evidence type="ECO:0000269" key="1">
    <source>
    </source>
</evidence>
<evidence type="ECO:0000269" key="2">
    <source>
    </source>
</evidence>
<evidence type="ECO:0000303" key="3">
    <source>
    </source>
</evidence>
<evidence type="ECO:0000305" key="4"/>
<evidence type="ECO:0000305" key="5">
    <source>
    </source>
</evidence>
<evidence type="ECO:0007744" key="6">
    <source>
        <dbReference type="PDB" id="1COJ"/>
    </source>
</evidence>
<evidence type="ECO:0007829" key="7">
    <source>
        <dbReference type="PDB" id="1COJ"/>
    </source>
</evidence>
<accession>Q9X6W9</accession>
<reference key="1">
    <citation type="journal article" date="1997" name="FEBS Lett.">
        <title>Cloning and expression of superoxide dismutase from Aquifex pyrophilus, a hyperthermophilic bacterium.</title>
        <authorList>
            <person name="Lim J.-H."/>
            <person name="Yu Y.G."/>
            <person name="Choi I.-G."/>
            <person name="Ryu J.-R."/>
            <person name="Ahn B.-Y."/>
            <person name="Kim S.-H."/>
            <person name="Han Y.S."/>
        </authorList>
    </citation>
    <scope>NUCLEOTIDE SEQUENCE [GENOMIC DNA]</scope>
    <scope>FUNCTION</scope>
    <scope>CATALYTIC ACTIVITY</scope>
    <scope>COFACTOR</scope>
    <scope>SUBUNIT</scope>
</reference>
<reference key="2">
    <citation type="journal article" date="1997" name="J. Mol. Biol.">
        <title>The crystal structure of an Fe-superoxide dismutase from the hyperthermophile Aquifex pyrophilus at 1.9-A resolution: structural basis for thermostability.</title>
        <authorList>
            <person name="Lim J.-H."/>
            <person name="Yu Y.G."/>
            <person name="Han Y.S."/>
            <person name="Cho S."/>
            <person name="Ahn B.-Y."/>
            <person name="Kim S.-H."/>
            <person name="Cho Y."/>
        </authorList>
    </citation>
    <scope>X-RAY CRYSTALLOGRAPHY (1.9 ANGSTROMS) OF 2-213 IN COMPLEX WITH IRON</scope>
    <scope>COFACTOR</scope>
    <scope>BIOPHYSICOCHEMICAL PROPERTIES</scope>
    <scope>SUBUNIT</scope>
</reference>
<keyword id="KW-0002">3D-structure</keyword>
<keyword id="KW-0408">Iron</keyword>
<keyword id="KW-0479">Metal-binding</keyword>
<keyword id="KW-0560">Oxidoreductase</keyword>
<name>SODF_AQUPY</name>
<comment type="function">
    <text evidence="5">Destroys superoxide anion radicals which are normally produced within the cells and which are toxic to biological systems.</text>
</comment>
<comment type="catalytic activity">
    <reaction evidence="1">
        <text>2 superoxide + 2 H(+) = H2O2 + O2</text>
        <dbReference type="Rhea" id="RHEA:20696"/>
        <dbReference type="ChEBI" id="CHEBI:15378"/>
        <dbReference type="ChEBI" id="CHEBI:15379"/>
        <dbReference type="ChEBI" id="CHEBI:16240"/>
        <dbReference type="ChEBI" id="CHEBI:18421"/>
        <dbReference type="EC" id="1.15.1.1"/>
    </reaction>
</comment>
<comment type="cofactor">
    <cofactor evidence="1 2">
        <name>Fe cation</name>
        <dbReference type="ChEBI" id="CHEBI:24875"/>
    </cofactor>
    <text evidence="1 2">Binds 1 Fe cation per subunit.</text>
</comment>
<comment type="biophysicochemical properties">
    <temperatureDependence>
        <text evidence="2">Highly thermostable. Retains about 70% of its activity after heating for 60 minutes at 100 degrees Celsius.</text>
    </temperatureDependence>
</comment>
<comment type="subunit">
    <text evidence="1 2">Homotetramer.</text>
</comment>
<comment type="similarity">
    <text evidence="4">Belongs to the iron/manganese superoxide dismutase family.</text>
</comment>
<organism>
    <name type="scientific">Aquifex pyrophilus</name>
    <dbReference type="NCBI Taxonomy" id="2714"/>
    <lineage>
        <taxon>Bacteria</taxon>
        <taxon>Pseudomonadati</taxon>
        <taxon>Aquificota</taxon>
        <taxon>Aquificia</taxon>
        <taxon>Aquificales</taxon>
        <taxon>Aquificaceae</taxon>
        <taxon>Aquifex</taxon>
    </lineage>
</organism>
<feature type="initiator methionine" description="Removed">
    <location>
        <position position="1"/>
    </location>
</feature>
<feature type="chain" id="PRO_0000159972" description="Superoxide dismutase [Fe]">
    <location>
        <begin position="2"/>
        <end position="213"/>
    </location>
</feature>
<feature type="binding site" evidence="2 6">
    <location>
        <position position="28"/>
    </location>
    <ligand>
        <name>Fe cation</name>
        <dbReference type="ChEBI" id="CHEBI:24875"/>
    </ligand>
</feature>
<feature type="binding site" evidence="2 6">
    <location>
        <position position="82"/>
    </location>
    <ligand>
        <name>Fe cation</name>
        <dbReference type="ChEBI" id="CHEBI:24875"/>
    </ligand>
</feature>
<feature type="binding site" evidence="2 6">
    <location>
        <position position="164"/>
    </location>
    <ligand>
        <name>Fe cation</name>
        <dbReference type="ChEBI" id="CHEBI:24875"/>
    </ligand>
</feature>
<feature type="binding site" evidence="2 6">
    <location>
        <position position="168"/>
    </location>
    <ligand>
        <name>Fe cation</name>
        <dbReference type="ChEBI" id="CHEBI:24875"/>
    </ligand>
</feature>
<feature type="helix" evidence="7">
    <location>
        <begin position="10"/>
        <end position="12"/>
    </location>
</feature>
<feature type="strand" evidence="7">
    <location>
        <begin position="18"/>
        <end position="20"/>
    </location>
</feature>
<feature type="helix" evidence="7">
    <location>
        <begin position="22"/>
        <end position="30"/>
    </location>
</feature>
<feature type="helix" evidence="7">
    <location>
        <begin position="32"/>
        <end position="48"/>
    </location>
</feature>
<feature type="turn" evidence="7">
    <location>
        <begin position="50"/>
        <end position="53"/>
    </location>
</feature>
<feature type="helix" evidence="7">
    <location>
        <begin position="55"/>
        <end position="57"/>
    </location>
</feature>
<feature type="strand" evidence="7">
    <location>
        <begin position="60"/>
        <end position="62"/>
    </location>
</feature>
<feature type="helix" evidence="7">
    <location>
        <begin position="64"/>
        <end position="87"/>
    </location>
</feature>
<feature type="helix" evidence="7">
    <location>
        <begin position="99"/>
        <end position="108"/>
    </location>
</feature>
<feature type="helix" evidence="7">
    <location>
        <begin position="112"/>
        <end position="125"/>
    </location>
</feature>
<feature type="strand" evidence="7">
    <location>
        <begin position="127"/>
        <end position="134"/>
    </location>
</feature>
<feature type="turn" evidence="7">
    <location>
        <begin position="136"/>
        <end position="138"/>
    </location>
</feature>
<feature type="strand" evidence="7">
    <location>
        <begin position="141"/>
        <end position="148"/>
    </location>
</feature>
<feature type="strand" evidence="7">
    <location>
        <begin position="158"/>
        <end position="164"/>
    </location>
</feature>
<feature type="helix" evidence="7">
    <location>
        <begin position="167"/>
        <end position="169"/>
    </location>
</feature>
<feature type="helix" evidence="7">
    <location>
        <begin position="171"/>
        <end position="174"/>
    </location>
</feature>
<feature type="helix" evidence="7">
    <location>
        <begin position="178"/>
        <end position="187"/>
    </location>
</feature>
<feature type="helix" evidence="7">
    <location>
        <begin position="191"/>
        <end position="208"/>
    </location>
</feature>
<gene>
    <name type="primary">sodB</name>
    <name type="synonym">sod</name>
</gene>
<protein>
    <recommendedName>
        <fullName evidence="4">Superoxide dismutase [Fe]</fullName>
        <shortName evidence="3">Fe-SOD</shortName>
        <ecNumber evidence="1">1.15.1.1</ecNumber>
    </recommendedName>
</protein>
<dbReference type="EC" id="1.15.1.1" evidence="1"/>
<dbReference type="EMBL" id="AF152997">
    <property type="protein sequence ID" value="AAD34161.1"/>
    <property type="molecule type" value="Genomic_DNA"/>
</dbReference>
<dbReference type="PDB" id="1COJ">
    <property type="method" value="X-ray"/>
    <property type="resolution" value="1.90 A"/>
    <property type="chains" value="A=2-213"/>
</dbReference>
<dbReference type="PDBsum" id="1COJ"/>
<dbReference type="SMR" id="Q9X6W9"/>
<dbReference type="EvolutionaryTrace" id="Q9X6W9"/>
<dbReference type="GO" id="GO:0046872">
    <property type="term" value="F:metal ion binding"/>
    <property type="evidence" value="ECO:0007669"/>
    <property type="project" value="UniProtKB-KW"/>
</dbReference>
<dbReference type="GO" id="GO:0004784">
    <property type="term" value="F:superoxide dismutase activity"/>
    <property type="evidence" value="ECO:0007669"/>
    <property type="project" value="UniProtKB-EC"/>
</dbReference>
<dbReference type="Gene3D" id="1.10.287.990">
    <property type="entry name" value="Fe,Mn superoxide dismutase (SOD) domain"/>
    <property type="match status" value="1"/>
</dbReference>
<dbReference type="Gene3D" id="3.55.40.20">
    <property type="entry name" value="Iron/manganese superoxide dismutase, C-terminal domain"/>
    <property type="match status" value="1"/>
</dbReference>
<dbReference type="InterPro" id="IPR050265">
    <property type="entry name" value="Fe/Mn_Superoxide_Dismutase"/>
</dbReference>
<dbReference type="InterPro" id="IPR001189">
    <property type="entry name" value="Mn/Fe_SOD"/>
</dbReference>
<dbReference type="InterPro" id="IPR019832">
    <property type="entry name" value="Mn/Fe_SOD_C"/>
</dbReference>
<dbReference type="InterPro" id="IPR019831">
    <property type="entry name" value="Mn/Fe_SOD_N"/>
</dbReference>
<dbReference type="InterPro" id="IPR036324">
    <property type="entry name" value="Mn/Fe_SOD_N_sf"/>
</dbReference>
<dbReference type="InterPro" id="IPR036314">
    <property type="entry name" value="SOD_C_sf"/>
</dbReference>
<dbReference type="PANTHER" id="PTHR11404">
    <property type="entry name" value="SUPEROXIDE DISMUTASE 2"/>
    <property type="match status" value="1"/>
</dbReference>
<dbReference type="PANTHER" id="PTHR11404:SF6">
    <property type="entry name" value="SUPEROXIDE DISMUTASE [MN], MITOCHONDRIAL"/>
    <property type="match status" value="1"/>
</dbReference>
<dbReference type="Pfam" id="PF02777">
    <property type="entry name" value="Sod_Fe_C"/>
    <property type="match status" value="1"/>
</dbReference>
<dbReference type="Pfam" id="PF00081">
    <property type="entry name" value="Sod_Fe_N"/>
    <property type="match status" value="1"/>
</dbReference>
<dbReference type="PIRSF" id="PIRSF000349">
    <property type="entry name" value="SODismutase"/>
    <property type="match status" value="1"/>
</dbReference>
<dbReference type="SUPFAM" id="SSF54719">
    <property type="entry name" value="Fe,Mn superoxide dismutase (SOD), C-terminal domain"/>
    <property type="match status" value="1"/>
</dbReference>
<dbReference type="SUPFAM" id="SSF46609">
    <property type="entry name" value="Fe,Mn superoxide dismutase (SOD), N-terminal domain"/>
    <property type="match status" value="1"/>
</dbReference>
<sequence length="213" mass="24475">MGVHKLEPKDHLKPQNLEGISNEQIEPHFEAHYKGYVAKYNEIQEKLADQNFADRSKANQNYSEYRELKVEETFNYMGVVLHELYFGMLTPGGKGEPSEALKKKIEEDIGGLDACTNELKAAAMAFRGWAILGLDIFSGRLVVNGLDAHNVYNLTGLIPLIVIDTYEHAYYVDYKNKRPPYIDAFFKNINWDVVNERFEKAMKAYEALKDFIK</sequence>
<proteinExistence type="evidence at protein level"/>